<gene>
    <name evidence="1" type="primary">fbpC3</name>
    <name type="ordered locus">RHA1_ro08545</name>
</gene>
<name>FBPC3_RHOJR</name>
<sequence length="346" mass="35950">MTYALEVDGVDKSFGGATILRGVAFAVEPGSTTAIVGPSGCGKTTLLRLIAGFEKPDAGTIALAGRVVAGGGWTPAHRRSVGYVAQDGALFPHATVGANVGFGLPRRARTPARIAELLEMVSLDPSFAVRRPDQLSGGQQQRVALARALAREPELMLLDEPFSALDAGLRANTRRIVADVLAKAAITTILVTHDQPEALSFAGRVAVMSAGRLAQIGTPREIYSTPIDVATAEFIGDAVVLSAHVDGGRAHCALGDVAVASNGVHGNARVMLRPEQIEVTTDGAGMSGTVVDVEYLGSEMLLGIRLDTGDGEVPERVTVRRFGATALTPGDRVGIRVLGQAVAYDI</sequence>
<evidence type="ECO:0000255" key="1">
    <source>
        <dbReference type="HAMAP-Rule" id="MF_01706"/>
    </source>
</evidence>
<feature type="chain" id="PRO_0000272047" description="Fe(3+) ions import ATP-binding protein FbpC 3">
    <location>
        <begin position="1"/>
        <end position="346"/>
    </location>
</feature>
<feature type="domain" description="ABC transporter" evidence="1">
    <location>
        <begin position="5"/>
        <end position="235"/>
    </location>
</feature>
<feature type="binding site" evidence="1">
    <location>
        <begin position="37"/>
        <end position="44"/>
    </location>
    <ligand>
        <name>ATP</name>
        <dbReference type="ChEBI" id="CHEBI:30616"/>
    </ligand>
</feature>
<protein>
    <recommendedName>
        <fullName evidence="1">Fe(3+) ions import ATP-binding protein FbpC 3</fullName>
        <ecNumber evidence="1">7.2.2.7</ecNumber>
    </recommendedName>
</protein>
<accession>Q0RYP7</accession>
<organism>
    <name type="scientific">Rhodococcus jostii (strain RHA1)</name>
    <dbReference type="NCBI Taxonomy" id="101510"/>
    <lineage>
        <taxon>Bacteria</taxon>
        <taxon>Bacillati</taxon>
        <taxon>Actinomycetota</taxon>
        <taxon>Actinomycetes</taxon>
        <taxon>Mycobacteriales</taxon>
        <taxon>Nocardiaceae</taxon>
        <taxon>Rhodococcus</taxon>
    </lineage>
</organism>
<keyword id="KW-0067">ATP-binding</keyword>
<keyword id="KW-1003">Cell membrane</keyword>
<keyword id="KW-0406">Ion transport</keyword>
<keyword id="KW-0408">Iron</keyword>
<keyword id="KW-0410">Iron transport</keyword>
<keyword id="KW-0472">Membrane</keyword>
<keyword id="KW-0547">Nucleotide-binding</keyword>
<keyword id="KW-0614">Plasmid</keyword>
<keyword id="KW-1278">Translocase</keyword>
<keyword id="KW-0813">Transport</keyword>
<comment type="function">
    <text evidence="1">Part of the ABC transporter complex FbpABC involved in Fe(3+) ions import. Responsible for energy coupling to the transport system.</text>
</comment>
<comment type="catalytic activity">
    <reaction evidence="1">
        <text>Fe(3+)(out) + ATP + H2O = Fe(3+)(in) + ADP + phosphate + H(+)</text>
        <dbReference type="Rhea" id="RHEA:12332"/>
        <dbReference type="ChEBI" id="CHEBI:15377"/>
        <dbReference type="ChEBI" id="CHEBI:15378"/>
        <dbReference type="ChEBI" id="CHEBI:29034"/>
        <dbReference type="ChEBI" id="CHEBI:30616"/>
        <dbReference type="ChEBI" id="CHEBI:43474"/>
        <dbReference type="ChEBI" id="CHEBI:456216"/>
        <dbReference type="EC" id="7.2.2.7"/>
    </reaction>
</comment>
<comment type="subunit">
    <text evidence="1">The complex is composed of two ATP-binding proteins (FbpC), two transmembrane proteins (FbpB) and a solute-binding protein (FbpA).</text>
</comment>
<comment type="subcellular location">
    <subcellularLocation>
        <location evidence="1">Cell membrane</location>
        <topology evidence="1">Peripheral membrane protein</topology>
    </subcellularLocation>
</comment>
<comment type="similarity">
    <text evidence="1">Belongs to the ABC transporter superfamily. Fe(3+) ion importer (TC 3.A.1.10) family.</text>
</comment>
<proteinExistence type="inferred from homology"/>
<reference key="1">
    <citation type="journal article" date="2006" name="Proc. Natl. Acad. Sci. U.S.A.">
        <title>The complete genome of Rhodococcus sp. RHA1 provides insights into a catabolic powerhouse.</title>
        <authorList>
            <person name="McLeod M.P."/>
            <person name="Warren R.L."/>
            <person name="Hsiao W.W.L."/>
            <person name="Araki N."/>
            <person name="Myhre M."/>
            <person name="Fernandes C."/>
            <person name="Miyazawa D."/>
            <person name="Wong W."/>
            <person name="Lillquist A.L."/>
            <person name="Wang D."/>
            <person name="Dosanjh M."/>
            <person name="Hara H."/>
            <person name="Petrescu A."/>
            <person name="Morin R.D."/>
            <person name="Yang G."/>
            <person name="Stott J.M."/>
            <person name="Schein J.E."/>
            <person name="Shin H."/>
            <person name="Smailus D."/>
            <person name="Siddiqui A.S."/>
            <person name="Marra M.A."/>
            <person name="Jones S.J.M."/>
            <person name="Holt R."/>
            <person name="Brinkman F.S.L."/>
            <person name="Miyauchi K."/>
            <person name="Fukuda M."/>
            <person name="Davies J.E."/>
            <person name="Mohn W.W."/>
            <person name="Eltis L.D."/>
        </authorList>
    </citation>
    <scope>NUCLEOTIDE SEQUENCE [LARGE SCALE GENOMIC DNA]</scope>
    <source>
        <strain>RHA1</strain>
    </source>
</reference>
<dbReference type="EC" id="7.2.2.7" evidence="1"/>
<dbReference type="EMBL" id="CP000432">
    <property type="protein sequence ID" value="ABG99589.1"/>
    <property type="molecule type" value="Genomic_DNA"/>
</dbReference>
<dbReference type="RefSeq" id="WP_007297804.1">
    <property type="nucleotide sequence ID" value="NC_008269.1"/>
</dbReference>
<dbReference type="SMR" id="Q0RYP7"/>
<dbReference type="KEGG" id="rha:RHA1_ro08545"/>
<dbReference type="HOGENOM" id="CLU_000604_1_1_11"/>
<dbReference type="OrthoDB" id="9802264at2"/>
<dbReference type="Proteomes" id="UP000008710">
    <property type="component" value="Plasmid pRHL1"/>
</dbReference>
<dbReference type="GO" id="GO:0043190">
    <property type="term" value="C:ATP-binding cassette (ABC) transporter complex"/>
    <property type="evidence" value="ECO:0007669"/>
    <property type="project" value="InterPro"/>
</dbReference>
<dbReference type="GO" id="GO:0015408">
    <property type="term" value="F:ABC-type ferric iron transporter activity"/>
    <property type="evidence" value="ECO:0007669"/>
    <property type="project" value="UniProtKB-EC"/>
</dbReference>
<dbReference type="GO" id="GO:0005524">
    <property type="term" value="F:ATP binding"/>
    <property type="evidence" value="ECO:0007669"/>
    <property type="project" value="UniProtKB-KW"/>
</dbReference>
<dbReference type="GO" id="GO:0016887">
    <property type="term" value="F:ATP hydrolysis activity"/>
    <property type="evidence" value="ECO:0007669"/>
    <property type="project" value="InterPro"/>
</dbReference>
<dbReference type="CDD" id="cd03259">
    <property type="entry name" value="ABC_Carb_Solutes_like"/>
    <property type="match status" value="1"/>
</dbReference>
<dbReference type="FunFam" id="3.40.50.300:FF:000425">
    <property type="entry name" value="Probable ABC transporter, ATP-binding subunit"/>
    <property type="match status" value="1"/>
</dbReference>
<dbReference type="Gene3D" id="2.40.50.450">
    <property type="match status" value="1"/>
</dbReference>
<dbReference type="Gene3D" id="3.40.50.300">
    <property type="entry name" value="P-loop containing nucleotide triphosphate hydrolases"/>
    <property type="match status" value="1"/>
</dbReference>
<dbReference type="InterPro" id="IPR003593">
    <property type="entry name" value="AAA+_ATPase"/>
</dbReference>
<dbReference type="InterPro" id="IPR050093">
    <property type="entry name" value="ABC_SmlMolc_Importer"/>
</dbReference>
<dbReference type="InterPro" id="IPR003439">
    <property type="entry name" value="ABC_transporter-like_ATP-bd"/>
</dbReference>
<dbReference type="InterPro" id="IPR017871">
    <property type="entry name" value="ABC_transporter-like_CS"/>
</dbReference>
<dbReference type="InterPro" id="IPR015853">
    <property type="entry name" value="ABC_transpr_FbpC"/>
</dbReference>
<dbReference type="InterPro" id="IPR008995">
    <property type="entry name" value="Mo/tungstate-bd_C_term_dom"/>
</dbReference>
<dbReference type="InterPro" id="IPR027417">
    <property type="entry name" value="P-loop_NTPase"/>
</dbReference>
<dbReference type="InterPro" id="IPR013611">
    <property type="entry name" value="Transp-assoc_OB_typ2"/>
</dbReference>
<dbReference type="PANTHER" id="PTHR42781">
    <property type="entry name" value="SPERMIDINE/PUTRESCINE IMPORT ATP-BINDING PROTEIN POTA"/>
    <property type="match status" value="1"/>
</dbReference>
<dbReference type="PANTHER" id="PTHR42781:SF4">
    <property type="entry name" value="SPERMIDINE_PUTRESCINE IMPORT ATP-BINDING PROTEIN POTA"/>
    <property type="match status" value="1"/>
</dbReference>
<dbReference type="Pfam" id="PF00005">
    <property type="entry name" value="ABC_tran"/>
    <property type="match status" value="1"/>
</dbReference>
<dbReference type="Pfam" id="PF08402">
    <property type="entry name" value="TOBE_2"/>
    <property type="match status" value="1"/>
</dbReference>
<dbReference type="SMART" id="SM00382">
    <property type="entry name" value="AAA"/>
    <property type="match status" value="1"/>
</dbReference>
<dbReference type="SUPFAM" id="SSF50331">
    <property type="entry name" value="MOP-like"/>
    <property type="match status" value="1"/>
</dbReference>
<dbReference type="SUPFAM" id="SSF52540">
    <property type="entry name" value="P-loop containing nucleoside triphosphate hydrolases"/>
    <property type="match status" value="1"/>
</dbReference>
<dbReference type="PROSITE" id="PS00211">
    <property type="entry name" value="ABC_TRANSPORTER_1"/>
    <property type="match status" value="1"/>
</dbReference>
<dbReference type="PROSITE" id="PS50893">
    <property type="entry name" value="ABC_TRANSPORTER_2"/>
    <property type="match status" value="1"/>
</dbReference>
<dbReference type="PROSITE" id="PS51242">
    <property type="entry name" value="FBPC"/>
    <property type="match status" value="1"/>
</dbReference>
<geneLocation type="plasmid">
    <name>pRHL1</name>
</geneLocation>